<accession>Q9CBS6</accession>
<accession>O69467</accession>
<protein>
    <recommendedName>
        <fullName>Uncharacterized protein ML1661</fullName>
    </recommendedName>
</protein>
<feature type="chain" id="PRO_0000104111" description="Uncharacterized protein ML1661">
    <location>
        <begin position="1"/>
        <end position="245"/>
    </location>
</feature>
<reference key="1">
    <citation type="journal article" date="2001" name="Nature">
        <title>Massive gene decay in the leprosy bacillus.</title>
        <authorList>
            <person name="Cole S.T."/>
            <person name="Eiglmeier K."/>
            <person name="Parkhill J."/>
            <person name="James K.D."/>
            <person name="Thomson N.R."/>
            <person name="Wheeler P.R."/>
            <person name="Honore N."/>
            <person name="Garnier T."/>
            <person name="Churcher C.M."/>
            <person name="Harris D.E."/>
            <person name="Mungall K.L."/>
            <person name="Basham D."/>
            <person name="Brown D."/>
            <person name="Chillingworth T."/>
            <person name="Connor R."/>
            <person name="Davies R.M."/>
            <person name="Devlin K."/>
            <person name="Duthoy S."/>
            <person name="Feltwell T."/>
            <person name="Fraser A."/>
            <person name="Hamlin N."/>
            <person name="Holroyd S."/>
            <person name="Hornsby T."/>
            <person name="Jagels K."/>
            <person name="Lacroix C."/>
            <person name="Maclean J."/>
            <person name="Moule S."/>
            <person name="Murphy L.D."/>
            <person name="Oliver K."/>
            <person name="Quail M.A."/>
            <person name="Rajandream M.A."/>
            <person name="Rutherford K.M."/>
            <person name="Rutter S."/>
            <person name="Seeger K."/>
            <person name="Simon S."/>
            <person name="Simmonds M."/>
            <person name="Skelton J."/>
            <person name="Squares R."/>
            <person name="Squares S."/>
            <person name="Stevens K."/>
            <person name="Taylor K."/>
            <person name="Whitehead S."/>
            <person name="Woodward J.R."/>
            <person name="Barrell B.G."/>
        </authorList>
    </citation>
    <scope>NUCLEOTIDE SEQUENCE [LARGE SCALE GENOMIC DNA]</scope>
    <source>
        <strain>TN</strain>
    </source>
</reference>
<keyword id="KW-1185">Reference proteome</keyword>
<sequence length="245" mass="27087">MYRVFEALDELGAIVEEARGVPMTAGCVVPRGDVLELIDDIKDAIPGELDDAQDVLDARDAMLNDAKAHADSMVSSATTESESLLSHARAEADRILSDAKSQVDRMASEARQHSERMLGDAREESIRIATVAKREYEASLNRAQSECDRLIENGNISYEKAIQEGIKEQQRLVSQNEVVQAANAESTRLIDTAHAEADRLRGECDIYVDNKLAEFEEFLNGTLRSVGRGRHQLRTAAGTHDYVTR</sequence>
<name>Y1661_MYCLE</name>
<evidence type="ECO:0000305" key="1"/>
<gene>
    <name type="ordered locus">ML1661</name>
    <name type="ORF">MLCB1243.13</name>
</gene>
<dbReference type="EMBL" id="AL023635">
    <property type="protein sequence ID" value="CAA19194.1"/>
    <property type="molecule type" value="Genomic_DNA"/>
</dbReference>
<dbReference type="EMBL" id="AL583923">
    <property type="protein sequence ID" value="CAC30614.1"/>
    <property type="status" value="ALT_INIT"/>
    <property type="molecule type" value="Genomic_DNA"/>
</dbReference>
<dbReference type="PIR" id="G87116">
    <property type="entry name" value="G87116"/>
</dbReference>
<dbReference type="PIR" id="T44704">
    <property type="entry name" value="T44704"/>
</dbReference>
<dbReference type="SMR" id="Q9CBS6"/>
<dbReference type="STRING" id="272631.gene:17575504"/>
<dbReference type="KEGG" id="mle:ML1661"/>
<dbReference type="Leproma" id="ML1661"/>
<dbReference type="eggNOG" id="COG3599">
    <property type="taxonomic scope" value="Bacteria"/>
</dbReference>
<dbReference type="HOGENOM" id="CLU_081796_0_0_11"/>
<dbReference type="Proteomes" id="UP000000806">
    <property type="component" value="Chromosome"/>
</dbReference>
<dbReference type="Gene3D" id="1.20.5.620">
    <property type="entry name" value="F1F0 ATP synthase subunit B, membrane domain"/>
    <property type="match status" value="2"/>
</dbReference>
<dbReference type="PANTHER" id="PTHR38010">
    <property type="entry name" value="SLR0848 PROTEIN"/>
    <property type="match status" value="1"/>
</dbReference>
<dbReference type="PANTHER" id="PTHR38010:SF1">
    <property type="entry name" value="SLR0848 PROTEIN"/>
    <property type="match status" value="1"/>
</dbReference>
<comment type="similarity">
    <text evidence="1">To M.tuberculosis Rv2927c.</text>
</comment>
<comment type="sequence caution" evidence="1">
    <conflict type="erroneous initiation">
        <sequence resource="EMBL-CDS" id="CAC30614"/>
    </conflict>
</comment>
<proteinExistence type="predicted"/>
<organism>
    <name type="scientific">Mycobacterium leprae (strain TN)</name>
    <dbReference type="NCBI Taxonomy" id="272631"/>
    <lineage>
        <taxon>Bacteria</taxon>
        <taxon>Bacillati</taxon>
        <taxon>Actinomycetota</taxon>
        <taxon>Actinomycetes</taxon>
        <taxon>Mycobacteriales</taxon>
        <taxon>Mycobacteriaceae</taxon>
        <taxon>Mycobacterium</taxon>
    </lineage>
</organism>